<proteinExistence type="inferred from homology"/>
<accession>C4K6R0</accession>
<name>AROK_HAMD5</name>
<feature type="chain" id="PRO_1000202901" description="Shikimate kinase 1">
    <location>
        <begin position="1"/>
        <end position="173"/>
    </location>
</feature>
<feature type="binding site" evidence="1">
    <location>
        <begin position="14"/>
        <end position="19"/>
    </location>
    <ligand>
        <name>ATP</name>
        <dbReference type="ChEBI" id="CHEBI:30616"/>
    </ligand>
</feature>
<feature type="binding site" evidence="1">
    <location>
        <position position="18"/>
    </location>
    <ligand>
        <name>Mg(2+)</name>
        <dbReference type="ChEBI" id="CHEBI:18420"/>
    </ligand>
</feature>
<feature type="binding site" evidence="1">
    <location>
        <position position="36"/>
    </location>
    <ligand>
        <name>substrate</name>
    </ligand>
</feature>
<feature type="binding site" evidence="1">
    <location>
        <position position="60"/>
    </location>
    <ligand>
        <name>substrate</name>
    </ligand>
</feature>
<feature type="binding site" evidence="1">
    <location>
        <position position="82"/>
    </location>
    <ligand>
        <name>substrate</name>
    </ligand>
</feature>
<feature type="binding site" evidence="1">
    <location>
        <position position="120"/>
    </location>
    <ligand>
        <name>ATP</name>
        <dbReference type="ChEBI" id="CHEBI:30616"/>
    </ligand>
</feature>
<feature type="binding site" evidence="1">
    <location>
        <position position="140"/>
    </location>
    <ligand>
        <name>substrate</name>
    </ligand>
</feature>
<reference key="1">
    <citation type="journal article" date="2009" name="Proc. Natl. Acad. Sci. U.S.A.">
        <title>Hamiltonella defensa, genome evolution of protective bacterial endosymbiont from pathogenic ancestors.</title>
        <authorList>
            <person name="Degnan P.H."/>
            <person name="Yu Y."/>
            <person name="Sisneros N."/>
            <person name="Wing R.A."/>
            <person name="Moran N.A."/>
        </authorList>
    </citation>
    <scope>NUCLEOTIDE SEQUENCE [LARGE SCALE GENOMIC DNA]</scope>
    <source>
        <strain>5AT</strain>
    </source>
</reference>
<protein>
    <recommendedName>
        <fullName evidence="1">Shikimate kinase 1</fullName>
        <shortName evidence="1">SK 1</shortName>
        <ecNumber evidence="1">2.7.1.71</ecNumber>
    </recommendedName>
</protein>
<keyword id="KW-0028">Amino-acid biosynthesis</keyword>
<keyword id="KW-0057">Aromatic amino acid biosynthesis</keyword>
<keyword id="KW-0067">ATP-binding</keyword>
<keyword id="KW-0963">Cytoplasm</keyword>
<keyword id="KW-0418">Kinase</keyword>
<keyword id="KW-0460">Magnesium</keyword>
<keyword id="KW-0479">Metal-binding</keyword>
<keyword id="KW-0547">Nucleotide-binding</keyword>
<keyword id="KW-0808">Transferase</keyword>
<dbReference type="EC" id="2.7.1.71" evidence="1"/>
<dbReference type="EMBL" id="CP001277">
    <property type="protein sequence ID" value="ACQ68253.1"/>
    <property type="molecule type" value="Genomic_DNA"/>
</dbReference>
<dbReference type="RefSeq" id="WP_015874020.1">
    <property type="nucleotide sequence ID" value="NC_012751.1"/>
</dbReference>
<dbReference type="SMR" id="C4K6R0"/>
<dbReference type="STRING" id="572265.HDEF_1641"/>
<dbReference type="GeneID" id="66261247"/>
<dbReference type="KEGG" id="hde:HDEF_1641"/>
<dbReference type="eggNOG" id="COG0703">
    <property type="taxonomic scope" value="Bacteria"/>
</dbReference>
<dbReference type="HOGENOM" id="CLU_057607_2_2_6"/>
<dbReference type="UniPathway" id="UPA00053">
    <property type="reaction ID" value="UER00088"/>
</dbReference>
<dbReference type="Proteomes" id="UP000002334">
    <property type="component" value="Chromosome"/>
</dbReference>
<dbReference type="GO" id="GO:0005829">
    <property type="term" value="C:cytosol"/>
    <property type="evidence" value="ECO:0007669"/>
    <property type="project" value="TreeGrafter"/>
</dbReference>
<dbReference type="GO" id="GO:0005524">
    <property type="term" value="F:ATP binding"/>
    <property type="evidence" value="ECO:0007669"/>
    <property type="project" value="UniProtKB-UniRule"/>
</dbReference>
<dbReference type="GO" id="GO:0000287">
    <property type="term" value="F:magnesium ion binding"/>
    <property type="evidence" value="ECO:0007669"/>
    <property type="project" value="UniProtKB-UniRule"/>
</dbReference>
<dbReference type="GO" id="GO:0004765">
    <property type="term" value="F:shikimate kinase activity"/>
    <property type="evidence" value="ECO:0007669"/>
    <property type="project" value="UniProtKB-UniRule"/>
</dbReference>
<dbReference type="GO" id="GO:0008652">
    <property type="term" value="P:amino acid biosynthetic process"/>
    <property type="evidence" value="ECO:0007669"/>
    <property type="project" value="UniProtKB-KW"/>
</dbReference>
<dbReference type="GO" id="GO:0009073">
    <property type="term" value="P:aromatic amino acid family biosynthetic process"/>
    <property type="evidence" value="ECO:0007669"/>
    <property type="project" value="UniProtKB-KW"/>
</dbReference>
<dbReference type="GO" id="GO:0009423">
    <property type="term" value="P:chorismate biosynthetic process"/>
    <property type="evidence" value="ECO:0007669"/>
    <property type="project" value="UniProtKB-UniRule"/>
</dbReference>
<dbReference type="CDD" id="cd00464">
    <property type="entry name" value="SK"/>
    <property type="match status" value="1"/>
</dbReference>
<dbReference type="FunFam" id="3.40.50.300:FF:000099">
    <property type="entry name" value="Shikimate kinase 1"/>
    <property type="match status" value="1"/>
</dbReference>
<dbReference type="Gene3D" id="3.40.50.300">
    <property type="entry name" value="P-loop containing nucleotide triphosphate hydrolases"/>
    <property type="match status" value="1"/>
</dbReference>
<dbReference type="HAMAP" id="MF_00109">
    <property type="entry name" value="Shikimate_kinase"/>
    <property type="match status" value="1"/>
</dbReference>
<dbReference type="InterPro" id="IPR027417">
    <property type="entry name" value="P-loop_NTPase"/>
</dbReference>
<dbReference type="InterPro" id="IPR031322">
    <property type="entry name" value="Shikimate/glucono_kinase"/>
</dbReference>
<dbReference type="InterPro" id="IPR000623">
    <property type="entry name" value="Shikimate_kinase/TSH1"/>
</dbReference>
<dbReference type="InterPro" id="IPR023000">
    <property type="entry name" value="Shikimate_kinase_CS"/>
</dbReference>
<dbReference type="NCBIfam" id="NF003456">
    <property type="entry name" value="PRK05057.1"/>
    <property type="match status" value="1"/>
</dbReference>
<dbReference type="PANTHER" id="PTHR21087">
    <property type="entry name" value="SHIKIMATE KINASE"/>
    <property type="match status" value="1"/>
</dbReference>
<dbReference type="PANTHER" id="PTHR21087:SF16">
    <property type="entry name" value="SHIKIMATE KINASE 1, CHLOROPLASTIC"/>
    <property type="match status" value="1"/>
</dbReference>
<dbReference type="Pfam" id="PF01202">
    <property type="entry name" value="SKI"/>
    <property type="match status" value="1"/>
</dbReference>
<dbReference type="PRINTS" id="PR01100">
    <property type="entry name" value="SHIKIMTKNASE"/>
</dbReference>
<dbReference type="SUPFAM" id="SSF52540">
    <property type="entry name" value="P-loop containing nucleoside triphosphate hydrolases"/>
    <property type="match status" value="1"/>
</dbReference>
<dbReference type="PROSITE" id="PS01128">
    <property type="entry name" value="SHIKIMATE_KINASE"/>
    <property type="match status" value="1"/>
</dbReference>
<comment type="function">
    <text evidence="1">Catalyzes the specific phosphorylation of the 3-hydroxyl group of shikimic acid using ATP as a cosubstrate.</text>
</comment>
<comment type="catalytic activity">
    <reaction evidence="1">
        <text>shikimate + ATP = 3-phosphoshikimate + ADP + H(+)</text>
        <dbReference type="Rhea" id="RHEA:13121"/>
        <dbReference type="ChEBI" id="CHEBI:15378"/>
        <dbReference type="ChEBI" id="CHEBI:30616"/>
        <dbReference type="ChEBI" id="CHEBI:36208"/>
        <dbReference type="ChEBI" id="CHEBI:145989"/>
        <dbReference type="ChEBI" id="CHEBI:456216"/>
        <dbReference type="EC" id="2.7.1.71"/>
    </reaction>
</comment>
<comment type="cofactor">
    <cofactor evidence="1">
        <name>Mg(2+)</name>
        <dbReference type="ChEBI" id="CHEBI:18420"/>
    </cofactor>
    <text evidence="1">Binds 1 Mg(2+) ion per subunit.</text>
</comment>
<comment type="pathway">
    <text evidence="1">Metabolic intermediate biosynthesis; chorismate biosynthesis; chorismate from D-erythrose 4-phosphate and phosphoenolpyruvate: step 5/7.</text>
</comment>
<comment type="subunit">
    <text evidence="1">Monomer.</text>
</comment>
<comment type="subcellular location">
    <subcellularLocation>
        <location evidence="1">Cytoplasm</location>
    </subcellularLocation>
</comment>
<comment type="similarity">
    <text evidence="1">Belongs to the shikimate kinase family.</text>
</comment>
<organism>
    <name type="scientific">Hamiltonella defensa subsp. Acyrthosiphon pisum (strain 5AT)</name>
    <dbReference type="NCBI Taxonomy" id="572265"/>
    <lineage>
        <taxon>Bacteria</taxon>
        <taxon>Pseudomonadati</taxon>
        <taxon>Pseudomonadota</taxon>
        <taxon>Gammaproteobacteria</taxon>
        <taxon>Enterobacterales</taxon>
        <taxon>Enterobacteriaceae</taxon>
        <taxon>aphid secondary symbionts</taxon>
        <taxon>Candidatus Hamiltonella</taxon>
    </lineage>
</organism>
<evidence type="ECO:0000255" key="1">
    <source>
        <dbReference type="HAMAP-Rule" id="MF_00109"/>
    </source>
</evidence>
<sequence>MIEKRNIFLVGPMGAGKSTIGRQLAQQLSMEFFDSDKEIERCTGADISWIFDLEGEQGFRYREEILINQLTEKKGIVLATGGGSIKSKETRNVLSARGVVIYLETSIEKQLIRTQRDKKRPLLQSVGQCPQFFQTLAKERNPLYEEIADIIIPTEDHSFKIVAKKIIHLLEKP</sequence>
<gene>
    <name evidence="1" type="primary">aroK</name>
    <name type="ordered locus">HDEF_1641</name>
</gene>